<dbReference type="EC" id="3.6.4.-" evidence="1"/>
<dbReference type="EMBL" id="CP000548">
    <property type="protein sequence ID" value="ABO03984.1"/>
    <property type="molecule type" value="Genomic_DNA"/>
</dbReference>
<dbReference type="RefSeq" id="WP_004194268.1">
    <property type="nucleotide sequence ID" value="NZ_CP007802.1"/>
</dbReference>
<dbReference type="SMR" id="A3MP72"/>
<dbReference type="GeneID" id="93061494"/>
<dbReference type="KEGG" id="bmaz:BM44_772"/>
<dbReference type="KEGG" id="bmn:BMA10247_2532"/>
<dbReference type="PATRIC" id="fig|320389.8.peg.858"/>
<dbReference type="GO" id="GO:0005737">
    <property type="term" value="C:cytoplasm"/>
    <property type="evidence" value="ECO:0007669"/>
    <property type="project" value="UniProtKB-SubCell"/>
</dbReference>
<dbReference type="GO" id="GO:0048476">
    <property type="term" value="C:Holliday junction resolvase complex"/>
    <property type="evidence" value="ECO:0007669"/>
    <property type="project" value="UniProtKB-UniRule"/>
</dbReference>
<dbReference type="GO" id="GO:0005524">
    <property type="term" value="F:ATP binding"/>
    <property type="evidence" value="ECO:0007669"/>
    <property type="project" value="UniProtKB-UniRule"/>
</dbReference>
<dbReference type="GO" id="GO:0016887">
    <property type="term" value="F:ATP hydrolysis activity"/>
    <property type="evidence" value="ECO:0007669"/>
    <property type="project" value="InterPro"/>
</dbReference>
<dbReference type="GO" id="GO:0000400">
    <property type="term" value="F:four-way junction DNA binding"/>
    <property type="evidence" value="ECO:0007669"/>
    <property type="project" value="UniProtKB-UniRule"/>
</dbReference>
<dbReference type="GO" id="GO:0009378">
    <property type="term" value="F:four-way junction helicase activity"/>
    <property type="evidence" value="ECO:0007669"/>
    <property type="project" value="InterPro"/>
</dbReference>
<dbReference type="GO" id="GO:0006310">
    <property type="term" value="P:DNA recombination"/>
    <property type="evidence" value="ECO:0007669"/>
    <property type="project" value="UniProtKB-UniRule"/>
</dbReference>
<dbReference type="GO" id="GO:0006281">
    <property type="term" value="P:DNA repair"/>
    <property type="evidence" value="ECO:0007669"/>
    <property type="project" value="UniProtKB-UniRule"/>
</dbReference>
<dbReference type="CDD" id="cd00009">
    <property type="entry name" value="AAA"/>
    <property type="match status" value="1"/>
</dbReference>
<dbReference type="FunFam" id="1.10.10.10:FF:000086">
    <property type="entry name" value="Holliday junction ATP-dependent DNA helicase RuvB"/>
    <property type="match status" value="1"/>
</dbReference>
<dbReference type="FunFam" id="3.40.50.300:FF:000073">
    <property type="entry name" value="Holliday junction ATP-dependent DNA helicase RuvB"/>
    <property type="match status" value="1"/>
</dbReference>
<dbReference type="Gene3D" id="1.10.8.60">
    <property type="match status" value="1"/>
</dbReference>
<dbReference type="Gene3D" id="3.40.50.300">
    <property type="entry name" value="P-loop containing nucleotide triphosphate hydrolases"/>
    <property type="match status" value="1"/>
</dbReference>
<dbReference type="Gene3D" id="1.10.10.10">
    <property type="entry name" value="Winged helix-like DNA-binding domain superfamily/Winged helix DNA-binding domain"/>
    <property type="match status" value="1"/>
</dbReference>
<dbReference type="HAMAP" id="MF_00016">
    <property type="entry name" value="DNA_HJ_migration_RuvB"/>
    <property type="match status" value="1"/>
</dbReference>
<dbReference type="InterPro" id="IPR003593">
    <property type="entry name" value="AAA+_ATPase"/>
</dbReference>
<dbReference type="InterPro" id="IPR041445">
    <property type="entry name" value="AAA_lid_4"/>
</dbReference>
<dbReference type="InterPro" id="IPR004605">
    <property type="entry name" value="DNA_helicase_Holl-junc_RuvB"/>
</dbReference>
<dbReference type="InterPro" id="IPR027417">
    <property type="entry name" value="P-loop_NTPase"/>
</dbReference>
<dbReference type="InterPro" id="IPR008824">
    <property type="entry name" value="RuvB-like_N"/>
</dbReference>
<dbReference type="InterPro" id="IPR008823">
    <property type="entry name" value="RuvB_C"/>
</dbReference>
<dbReference type="InterPro" id="IPR036388">
    <property type="entry name" value="WH-like_DNA-bd_sf"/>
</dbReference>
<dbReference type="InterPro" id="IPR036390">
    <property type="entry name" value="WH_DNA-bd_sf"/>
</dbReference>
<dbReference type="NCBIfam" id="NF000868">
    <property type="entry name" value="PRK00080.1"/>
    <property type="match status" value="1"/>
</dbReference>
<dbReference type="NCBIfam" id="TIGR00635">
    <property type="entry name" value="ruvB"/>
    <property type="match status" value="1"/>
</dbReference>
<dbReference type="PANTHER" id="PTHR42848">
    <property type="match status" value="1"/>
</dbReference>
<dbReference type="PANTHER" id="PTHR42848:SF1">
    <property type="entry name" value="HOLLIDAY JUNCTION BRANCH MIGRATION COMPLEX SUBUNIT RUVB"/>
    <property type="match status" value="1"/>
</dbReference>
<dbReference type="Pfam" id="PF17864">
    <property type="entry name" value="AAA_lid_4"/>
    <property type="match status" value="1"/>
</dbReference>
<dbReference type="Pfam" id="PF05491">
    <property type="entry name" value="RuvB_C"/>
    <property type="match status" value="1"/>
</dbReference>
<dbReference type="Pfam" id="PF05496">
    <property type="entry name" value="RuvB_N"/>
    <property type="match status" value="1"/>
</dbReference>
<dbReference type="SMART" id="SM00382">
    <property type="entry name" value="AAA"/>
    <property type="match status" value="1"/>
</dbReference>
<dbReference type="SUPFAM" id="SSF52540">
    <property type="entry name" value="P-loop containing nucleoside triphosphate hydrolases"/>
    <property type="match status" value="1"/>
</dbReference>
<dbReference type="SUPFAM" id="SSF46785">
    <property type="entry name" value="Winged helix' DNA-binding domain"/>
    <property type="match status" value="1"/>
</dbReference>
<feature type="chain" id="PRO_1000001371" description="Holliday junction branch migration complex subunit RuvB">
    <location>
        <begin position="1"/>
        <end position="356"/>
    </location>
</feature>
<feature type="region of interest" description="Large ATPase domain (RuvB-L)" evidence="1">
    <location>
        <begin position="4"/>
        <end position="190"/>
    </location>
</feature>
<feature type="region of interest" description="Small ATPAse domain (RuvB-S)" evidence="1">
    <location>
        <begin position="191"/>
        <end position="261"/>
    </location>
</feature>
<feature type="region of interest" description="Head domain (RuvB-H)" evidence="1">
    <location>
        <begin position="264"/>
        <end position="356"/>
    </location>
</feature>
<feature type="binding site" evidence="1">
    <location>
        <position position="29"/>
    </location>
    <ligand>
        <name>ATP</name>
        <dbReference type="ChEBI" id="CHEBI:30616"/>
    </ligand>
</feature>
<feature type="binding site" evidence="1">
    <location>
        <position position="30"/>
    </location>
    <ligand>
        <name>ATP</name>
        <dbReference type="ChEBI" id="CHEBI:30616"/>
    </ligand>
</feature>
<feature type="binding site" evidence="1">
    <location>
        <position position="71"/>
    </location>
    <ligand>
        <name>ATP</name>
        <dbReference type="ChEBI" id="CHEBI:30616"/>
    </ligand>
</feature>
<feature type="binding site" evidence="1">
    <location>
        <position position="74"/>
    </location>
    <ligand>
        <name>ATP</name>
        <dbReference type="ChEBI" id="CHEBI:30616"/>
    </ligand>
</feature>
<feature type="binding site" evidence="1">
    <location>
        <position position="75"/>
    </location>
    <ligand>
        <name>ATP</name>
        <dbReference type="ChEBI" id="CHEBI:30616"/>
    </ligand>
</feature>
<feature type="binding site" evidence="1">
    <location>
        <position position="75"/>
    </location>
    <ligand>
        <name>Mg(2+)</name>
        <dbReference type="ChEBI" id="CHEBI:18420"/>
    </ligand>
</feature>
<feature type="binding site" evidence="1">
    <location>
        <position position="76"/>
    </location>
    <ligand>
        <name>ATP</name>
        <dbReference type="ChEBI" id="CHEBI:30616"/>
    </ligand>
</feature>
<feature type="binding site" evidence="1">
    <location>
        <begin position="137"/>
        <end position="139"/>
    </location>
    <ligand>
        <name>ATP</name>
        <dbReference type="ChEBI" id="CHEBI:30616"/>
    </ligand>
</feature>
<feature type="binding site" evidence="1">
    <location>
        <position position="180"/>
    </location>
    <ligand>
        <name>ATP</name>
        <dbReference type="ChEBI" id="CHEBI:30616"/>
    </ligand>
</feature>
<feature type="binding site" evidence="1">
    <location>
        <position position="190"/>
    </location>
    <ligand>
        <name>ATP</name>
        <dbReference type="ChEBI" id="CHEBI:30616"/>
    </ligand>
</feature>
<feature type="binding site" evidence="1">
    <location>
        <position position="227"/>
    </location>
    <ligand>
        <name>ATP</name>
        <dbReference type="ChEBI" id="CHEBI:30616"/>
    </ligand>
</feature>
<feature type="binding site" evidence="1">
    <location>
        <position position="300"/>
    </location>
    <ligand>
        <name>DNA</name>
        <dbReference type="ChEBI" id="CHEBI:16991"/>
    </ligand>
</feature>
<feature type="binding site" evidence="1">
    <location>
        <position position="319"/>
    </location>
    <ligand>
        <name>DNA</name>
        <dbReference type="ChEBI" id="CHEBI:16991"/>
    </ligand>
</feature>
<feature type="binding site" evidence="1">
    <location>
        <position position="324"/>
    </location>
    <ligand>
        <name>DNA</name>
        <dbReference type="ChEBI" id="CHEBI:16991"/>
    </ligand>
</feature>
<accession>A3MP72</accession>
<reference key="1">
    <citation type="journal article" date="2010" name="Genome Biol. Evol.">
        <title>Continuing evolution of Burkholderia mallei through genome reduction and large-scale rearrangements.</title>
        <authorList>
            <person name="Losada L."/>
            <person name="Ronning C.M."/>
            <person name="DeShazer D."/>
            <person name="Woods D."/>
            <person name="Fedorova N."/>
            <person name="Kim H.S."/>
            <person name="Shabalina S.A."/>
            <person name="Pearson T.R."/>
            <person name="Brinkac L."/>
            <person name="Tan P."/>
            <person name="Nandi T."/>
            <person name="Crabtree J."/>
            <person name="Badger J."/>
            <person name="Beckstrom-Sternberg S."/>
            <person name="Saqib M."/>
            <person name="Schutzer S.E."/>
            <person name="Keim P."/>
            <person name="Nierman W.C."/>
        </authorList>
    </citation>
    <scope>NUCLEOTIDE SEQUENCE [LARGE SCALE GENOMIC DNA]</scope>
    <source>
        <strain>NCTC 10247</strain>
    </source>
</reference>
<organism>
    <name type="scientific">Burkholderia mallei (strain NCTC 10247)</name>
    <dbReference type="NCBI Taxonomy" id="320389"/>
    <lineage>
        <taxon>Bacteria</taxon>
        <taxon>Pseudomonadati</taxon>
        <taxon>Pseudomonadota</taxon>
        <taxon>Betaproteobacteria</taxon>
        <taxon>Burkholderiales</taxon>
        <taxon>Burkholderiaceae</taxon>
        <taxon>Burkholderia</taxon>
        <taxon>pseudomallei group</taxon>
    </lineage>
</organism>
<comment type="function">
    <text evidence="1">The RuvA-RuvB-RuvC complex processes Holliday junction (HJ) DNA during genetic recombination and DNA repair, while the RuvA-RuvB complex plays an important role in the rescue of blocked DNA replication forks via replication fork reversal (RFR). RuvA specifically binds to HJ cruciform DNA, conferring on it an open structure. The RuvB hexamer acts as an ATP-dependent pump, pulling dsDNA into and through the RuvAB complex. RuvB forms 2 homohexamers on either side of HJ DNA bound by 1 or 2 RuvA tetramers; 4 subunits per hexamer contact DNA at a time. Coordinated motions by a converter formed by DNA-disengaged RuvB subunits stimulates ATP hydrolysis and nucleotide exchange. Immobilization of the converter enables RuvB to convert the ATP-contained energy into a lever motion, pulling 2 nucleotides of DNA out of the RuvA tetramer per ATP hydrolyzed, thus driving DNA branch migration. The RuvB motors rotate together with the DNA substrate, which together with the progressing nucleotide cycle form the mechanistic basis for DNA recombination by continuous HJ branch migration. Branch migration allows RuvC to scan DNA until it finds its consensus sequence, where it cleaves and resolves cruciform DNA.</text>
</comment>
<comment type="catalytic activity">
    <reaction evidence="1">
        <text>ATP + H2O = ADP + phosphate + H(+)</text>
        <dbReference type="Rhea" id="RHEA:13065"/>
        <dbReference type="ChEBI" id="CHEBI:15377"/>
        <dbReference type="ChEBI" id="CHEBI:15378"/>
        <dbReference type="ChEBI" id="CHEBI:30616"/>
        <dbReference type="ChEBI" id="CHEBI:43474"/>
        <dbReference type="ChEBI" id="CHEBI:456216"/>
    </reaction>
</comment>
<comment type="subunit">
    <text evidence="1">Homohexamer. Forms an RuvA(8)-RuvB(12)-Holliday junction (HJ) complex. HJ DNA is sandwiched between 2 RuvA tetramers; dsDNA enters through RuvA and exits via RuvB. An RuvB hexamer assembles on each DNA strand where it exits the tetramer. Each RuvB hexamer is contacted by two RuvA subunits (via domain III) on 2 adjacent RuvB subunits; this complex drives branch migration. In the full resolvosome a probable DNA-RuvA(4)-RuvB(12)-RuvC(2) complex forms which resolves the HJ.</text>
</comment>
<comment type="subcellular location">
    <subcellularLocation>
        <location evidence="1">Cytoplasm</location>
    </subcellularLocation>
</comment>
<comment type="domain">
    <text evidence="1">Has 3 domains, the large (RuvB-L) and small ATPase (RuvB-S) domains and the C-terminal head (RuvB-H) domain. The head domain binds DNA, while the ATPase domains jointly bind ATP, ADP or are empty depending on the state of the subunit in the translocation cycle. During a single DNA translocation step the structure of each domain remains the same, but their relative positions change.</text>
</comment>
<comment type="similarity">
    <text evidence="1">Belongs to the RuvB family.</text>
</comment>
<name>RUVB_BURM7</name>
<protein>
    <recommendedName>
        <fullName evidence="1">Holliday junction branch migration complex subunit RuvB</fullName>
        <ecNumber evidence="1">3.6.4.-</ecNumber>
    </recommendedName>
</protein>
<proteinExistence type="inferred from homology"/>
<evidence type="ECO:0000255" key="1">
    <source>
        <dbReference type="HAMAP-Rule" id="MF_00016"/>
    </source>
</evidence>
<sequence>MIETDKLAAERIIAATPASSHEEAFERALRPRQLDEYVGQEKVRDQLEIFIEAAKRRSEALDHVLLFGPPGLGKTTLAHIIAREMGVNLRQTSGPVLERAGDLAALLTNLEANDVLFIDEIHRLSPVVEEILYPALEDYQIDIMIGEGPAARSVKLDLQPFTLVGATTRAGMLTNPLRDRFGIVARLEFYDAEQLSRIVRRSAALLNAQIDPAGALEIAKRSRGTPRIANRLLRRVRDYAEVKADGNITAAVADAALAMLDVDPVGFDLMDRKLLEAILHKFDGGPVGVDNLAAAIGEERDTIEDVLEPYLIQQGFLQRTPRGRVATLLTYRHFGLSAPDAANPVRNLWDTPDAEC</sequence>
<keyword id="KW-0067">ATP-binding</keyword>
<keyword id="KW-0963">Cytoplasm</keyword>
<keyword id="KW-0227">DNA damage</keyword>
<keyword id="KW-0233">DNA recombination</keyword>
<keyword id="KW-0234">DNA repair</keyword>
<keyword id="KW-0238">DNA-binding</keyword>
<keyword id="KW-0378">Hydrolase</keyword>
<keyword id="KW-0547">Nucleotide-binding</keyword>
<gene>
    <name evidence="1" type="primary">ruvB</name>
    <name type="ordered locus">BMA10247_2532</name>
</gene>